<accession>A7HVT8</accession>
<dbReference type="EMBL" id="CP000774">
    <property type="protein sequence ID" value="ABS64021.1"/>
    <property type="molecule type" value="Genomic_DNA"/>
</dbReference>
<dbReference type="RefSeq" id="WP_012111330.1">
    <property type="nucleotide sequence ID" value="NC_009719.1"/>
</dbReference>
<dbReference type="SMR" id="A7HVT8"/>
<dbReference type="STRING" id="402881.Plav_2412"/>
<dbReference type="KEGG" id="pla:Plav_2412"/>
<dbReference type="eggNOG" id="COG2001">
    <property type="taxonomic scope" value="Bacteria"/>
</dbReference>
<dbReference type="HOGENOM" id="CLU_107907_1_0_5"/>
<dbReference type="OrthoDB" id="9807753at2"/>
<dbReference type="Proteomes" id="UP000006377">
    <property type="component" value="Chromosome"/>
</dbReference>
<dbReference type="GO" id="GO:0005737">
    <property type="term" value="C:cytoplasm"/>
    <property type="evidence" value="ECO:0007669"/>
    <property type="project" value="UniProtKB-UniRule"/>
</dbReference>
<dbReference type="GO" id="GO:0009295">
    <property type="term" value="C:nucleoid"/>
    <property type="evidence" value="ECO:0007669"/>
    <property type="project" value="UniProtKB-SubCell"/>
</dbReference>
<dbReference type="GO" id="GO:0003700">
    <property type="term" value="F:DNA-binding transcription factor activity"/>
    <property type="evidence" value="ECO:0007669"/>
    <property type="project" value="UniProtKB-UniRule"/>
</dbReference>
<dbReference type="GO" id="GO:0000976">
    <property type="term" value="F:transcription cis-regulatory region binding"/>
    <property type="evidence" value="ECO:0007669"/>
    <property type="project" value="TreeGrafter"/>
</dbReference>
<dbReference type="GO" id="GO:2000143">
    <property type="term" value="P:negative regulation of DNA-templated transcription initiation"/>
    <property type="evidence" value="ECO:0007669"/>
    <property type="project" value="TreeGrafter"/>
</dbReference>
<dbReference type="CDD" id="cd16321">
    <property type="entry name" value="MraZ_C"/>
    <property type="match status" value="1"/>
</dbReference>
<dbReference type="CDD" id="cd16320">
    <property type="entry name" value="MraZ_N"/>
    <property type="match status" value="1"/>
</dbReference>
<dbReference type="Gene3D" id="3.40.1550.20">
    <property type="entry name" value="Transcriptional regulator MraZ domain"/>
    <property type="match status" value="1"/>
</dbReference>
<dbReference type="HAMAP" id="MF_01008">
    <property type="entry name" value="MraZ"/>
    <property type="match status" value="1"/>
</dbReference>
<dbReference type="InterPro" id="IPR003444">
    <property type="entry name" value="MraZ"/>
</dbReference>
<dbReference type="InterPro" id="IPR035644">
    <property type="entry name" value="MraZ_C"/>
</dbReference>
<dbReference type="InterPro" id="IPR020603">
    <property type="entry name" value="MraZ_dom"/>
</dbReference>
<dbReference type="InterPro" id="IPR035642">
    <property type="entry name" value="MraZ_N"/>
</dbReference>
<dbReference type="InterPro" id="IPR038619">
    <property type="entry name" value="MraZ_sf"/>
</dbReference>
<dbReference type="InterPro" id="IPR007159">
    <property type="entry name" value="SpoVT-AbrB_dom"/>
</dbReference>
<dbReference type="InterPro" id="IPR037914">
    <property type="entry name" value="SpoVT-AbrB_sf"/>
</dbReference>
<dbReference type="PANTHER" id="PTHR34701">
    <property type="entry name" value="TRANSCRIPTIONAL REGULATOR MRAZ"/>
    <property type="match status" value="1"/>
</dbReference>
<dbReference type="PANTHER" id="PTHR34701:SF1">
    <property type="entry name" value="TRANSCRIPTIONAL REGULATOR MRAZ"/>
    <property type="match status" value="1"/>
</dbReference>
<dbReference type="Pfam" id="PF02381">
    <property type="entry name" value="MraZ"/>
    <property type="match status" value="1"/>
</dbReference>
<dbReference type="SUPFAM" id="SSF89447">
    <property type="entry name" value="AbrB/MazE/MraZ-like"/>
    <property type="match status" value="1"/>
</dbReference>
<dbReference type="PROSITE" id="PS51740">
    <property type="entry name" value="SPOVT_ABRB"/>
    <property type="match status" value="2"/>
</dbReference>
<name>MRAZ_PARL1</name>
<reference key="1">
    <citation type="journal article" date="2011" name="Stand. Genomic Sci.">
        <title>Complete genome sequence of Parvibaculum lavamentivorans type strain (DS-1(T)).</title>
        <authorList>
            <person name="Schleheck D."/>
            <person name="Weiss M."/>
            <person name="Pitluck S."/>
            <person name="Bruce D."/>
            <person name="Land M.L."/>
            <person name="Han S."/>
            <person name="Saunders E."/>
            <person name="Tapia R."/>
            <person name="Detter C."/>
            <person name="Brettin T."/>
            <person name="Han J."/>
            <person name="Woyke T."/>
            <person name="Goodwin L."/>
            <person name="Pennacchio L."/>
            <person name="Nolan M."/>
            <person name="Cook A.M."/>
            <person name="Kjelleberg S."/>
            <person name="Thomas T."/>
        </authorList>
    </citation>
    <scope>NUCLEOTIDE SEQUENCE [LARGE SCALE GENOMIC DNA]</scope>
    <source>
        <strain>DS-1 / DSM 13023 / NCIMB 13966</strain>
    </source>
</reference>
<protein>
    <recommendedName>
        <fullName>Transcriptional regulator MraZ</fullName>
    </recommendedName>
</protein>
<evidence type="ECO:0000255" key="1">
    <source>
        <dbReference type="HAMAP-Rule" id="MF_01008"/>
    </source>
</evidence>
<evidence type="ECO:0000255" key="2">
    <source>
        <dbReference type="PROSITE-ProRule" id="PRU01076"/>
    </source>
</evidence>
<proteinExistence type="inferred from homology"/>
<sequence>MNSFRGRYTNKIDSKGRVSVPAKFRAVSIAQGLNGIICFPPLSEGKFIEGCGPAFSEEIDRMLDRLDPFSEERDMLASVLLGESAELMFDADGRVNLPDNLRELAGLTDEVVFVGAGPRFQIWEPGAYAAFAVEAQKRVPGFRELLKSTQASLRPEGGGGR</sequence>
<keyword id="KW-0963">Cytoplasm</keyword>
<keyword id="KW-0238">DNA-binding</keyword>
<keyword id="KW-1185">Reference proteome</keyword>
<keyword id="KW-0677">Repeat</keyword>
<keyword id="KW-0804">Transcription</keyword>
<keyword id="KW-0805">Transcription regulation</keyword>
<comment type="subunit">
    <text evidence="1">Forms oligomers.</text>
</comment>
<comment type="subcellular location">
    <subcellularLocation>
        <location evidence="1">Cytoplasm</location>
        <location evidence="1">Nucleoid</location>
    </subcellularLocation>
</comment>
<comment type="similarity">
    <text evidence="1">Belongs to the MraZ family.</text>
</comment>
<feature type="chain" id="PRO_1000072902" description="Transcriptional regulator MraZ">
    <location>
        <begin position="1"/>
        <end position="161"/>
    </location>
</feature>
<feature type="domain" description="SpoVT-AbrB 1" evidence="2">
    <location>
        <begin position="7"/>
        <end position="55"/>
    </location>
</feature>
<feature type="domain" description="SpoVT-AbrB 2" evidence="2">
    <location>
        <begin position="84"/>
        <end position="127"/>
    </location>
</feature>
<gene>
    <name evidence="1" type="primary">mraZ</name>
    <name type="ordered locus">Plav_2412</name>
</gene>
<organism>
    <name type="scientific">Parvibaculum lavamentivorans (strain DS-1 / DSM 13023 / NCIMB 13966)</name>
    <dbReference type="NCBI Taxonomy" id="402881"/>
    <lineage>
        <taxon>Bacteria</taxon>
        <taxon>Pseudomonadati</taxon>
        <taxon>Pseudomonadota</taxon>
        <taxon>Alphaproteobacteria</taxon>
        <taxon>Hyphomicrobiales</taxon>
        <taxon>Parvibaculaceae</taxon>
        <taxon>Parvibaculum</taxon>
    </lineage>
</organism>